<protein>
    <recommendedName>
        <fullName evidence="1">Probable endonuclease 4</fullName>
        <ecNumber evidence="1">3.1.21.2</ecNumber>
    </recommendedName>
    <alternativeName>
        <fullName evidence="1">Endodeoxyribonuclease IV</fullName>
    </alternativeName>
    <alternativeName>
        <fullName evidence="1">Endonuclease IV</fullName>
    </alternativeName>
</protein>
<gene>
    <name evidence="1" type="primary">nfo</name>
    <name type="ordered locus">NWMN_1460</name>
</gene>
<feature type="chain" id="PRO_1000071527" description="Probable endonuclease 4">
    <location>
        <begin position="1"/>
        <end position="296"/>
    </location>
</feature>
<feature type="binding site" evidence="1">
    <location>
        <position position="68"/>
    </location>
    <ligand>
        <name>Zn(2+)</name>
        <dbReference type="ChEBI" id="CHEBI:29105"/>
        <label>1</label>
    </ligand>
</feature>
<feature type="binding site" evidence="1">
    <location>
        <position position="109"/>
    </location>
    <ligand>
        <name>Zn(2+)</name>
        <dbReference type="ChEBI" id="CHEBI:29105"/>
        <label>1</label>
    </ligand>
</feature>
<feature type="binding site" evidence="1">
    <location>
        <position position="144"/>
    </location>
    <ligand>
        <name>Zn(2+)</name>
        <dbReference type="ChEBI" id="CHEBI:29105"/>
        <label>1</label>
    </ligand>
</feature>
<feature type="binding site" evidence="1">
    <location>
        <position position="144"/>
    </location>
    <ligand>
        <name>Zn(2+)</name>
        <dbReference type="ChEBI" id="CHEBI:29105"/>
        <label>2</label>
    </ligand>
</feature>
<feature type="binding site" evidence="1">
    <location>
        <position position="178"/>
    </location>
    <ligand>
        <name>Zn(2+)</name>
        <dbReference type="ChEBI" id="CHEBI:29105"/>
        <label>2</label>
    </ligand>
</feature>
<feature type="binding site" evidence="1">
    <location>
        <position position="181"/>
    </location>
    <ligand>
        <name>Zn(2+)</name>
        <dbReference type="ChEBI" id="CHEBI:29105"/>
        <label>3</label>
    </ligand>
</feature>
<feature type="binding site" evidence="1">
    <location>
        <position position="213"/>
    </location>
    <ligand>
        <name>Zn(2+)</name>
        <dbReference type="ChEBI" id="CHEBI:29105"/>
        <label>2</label>
    </ligand>
</feature>
<feature type="binding site" evidence="1">
    <location>
        <position position="226"/>
    </location>
    <ligand>
        <name>Zn(2+)</name>
        <dbReference type="ChEBI" id="CHEBI:29105"/>
        <label>3</label>
    </ligand>
</feature>
<feature type="binding site" evidence="1">
    <location>
        <position position="228"/>
    </location>
    <ligand>
        <name>Zn(2+)</name>
        <dbReference type="ChEBI" id="CHEBI:29105"/>
        <label>3</label>
    </ligand>
</feature>
<feature type="binding site" evidence="1">
    <location>
        <position position="258"/>
    </location>
    <ligand>
        <name>Zn(2+)</name>
        <dbReference type="ChEBI" id="CHEBI:29105"/>
        <label>2</label>
    </ligand>
</feature>
<evidence type="ECO:0000255" key="1">
    <source>
        <dbReference type="HAMAP-Rule" id="MF_00152"/>
    </source>
</evidence>
<keyword id="KW-0227">DNA damage</keyword>
<keyword id="KW-0234">DNA repair</keyword>
<keyword id="KW-0255">Endonuclease</keyword>
<keyword id="KW-0378">Hydrolase</keyword>
<keyword id="KW-0479">Metal-binding</keyword>
<keyword id="KW-0540">Nuclease</keyword>
<keyword id="KW-0862">Zinc</keyword>
<reference key="1">
    <citation type="journal article" date="2008" name="J. Bacteriol.">
        <title>Genome sequence of Staphylococcus aureus strain Newman and comparative analysis of staphylococcal genomes: polymorphism and evolution of two major pathogenicity islands.</title>
        <authorList>
            <person name="Baba T."/>
            <person name="Bae T."/>
            <person name="Schneewind O."/>
            <person name="Takeuchi F."/>
            <person name="Hiramatsu K."/>
        </authorList>
    </citation>
    <scope>NUCLEOTIDE SEQUENCE [LARGE SCALE GENOMIC DNA]</scope>
    <source>
        <strain>Newman</strain>
    </source>
</reference>
<name>END4_STAAE</name>
<comment type="function">
    <text evidence="1">Endonuclease IV plays a role in DNA repair. It cleaves phosphodiester bonds at apurinic or apyrimidinic (AP) sites, generating a 3'-hydroxyl group and a 5'-terminal sugar phosphate.</text>
</comment>
<comment type="catalytic activity">
    <reaction evidence="1">
        <text>Endonucleolytic cleavage to 5'-phosphooligonucleotide end-products.</text>
        <dbReference type="EC" id="3.1.21.2"/>
    </reaction>
</comment>
<comment type="cofactor">
    <cofactor evidence="1">
        <name>Zn(2+)</name>
        <dbReference type="ChEBI" id="CHEBI:29105"/>
    </cofactor>
    <text evidence="1">Binds 3 Zn(2+) ions.</text>
</comment>
<comment type="similarity">
    <text evidence="1">Belongs to the AP endonuclease 2 family.</text>
</comment>
<proteinExistence type="inferred from homology"/>
<organism>
    <name type="scientific">Staphylococcus aureus (strain Newman)</name>
    <dbReference type="NCBI Taxonomy" id="426430"/>
    <lineage>
        <taxon>Bacteria</taxon>
        <taxon>Bacillati</taxon>
        <taxon>Bacillota</taxon>
        <taxon>Bacilli</taxon>
        <taxon>Bacillales</taxon>
        <taxon>Staphylococcaceae</taxon>
        <taxon>Staphylococcus</taxon>
    </lineage>
</organism>
<dbReference type="EC" id="3.1.21.2" evidence="1"/>
<dbReference type="EMBL" id="AP009351">
    <property type="protein sequence ID" value="BAF67732.1"/>
    <property type="molecule type" value="Genomic_DNA"/>
</dbReference>
<dbReference type="RefSeq" id="WP_000924214.1">
    <property type="nucleotide sequence ID" value="NZ_JBBIAE010000001.1"/>
</dbReference>
<dbReference type="SMR" id="A6QHA0"/>
<dbReference type="KEGG" id="sae:NWMN_1460"/>
<dbReference type="HOGENOM" id="CLU_025885_4_1_9"/>
<dbReference type="Proteomes" id="UP000006386">
    <property type="component" value="Chromosome"/>
</dbReference>
<dbReference type="GO" id="GO:0008833">
    <property type="term" value="F:deoxyribonuclease IV (phage-T4-induced) activity"/>
    <property type="evidence" value="ECO:0007669"/>
    <property type="project" value="UniProtKB-UniRule"/>
</dbReference>
<dbReference type="GO" id="GO:0003677">
    <property type="term" value="F:DNA binding"/>
    <property type="evidence" value="ECO:0007669"/>
    <property type="project" value="InterPro"/>
</dbReference>
<dbReference type="GO" id="GO:0003906">
    <property type="term" value="F:DNA-(apurinic or apyrimidinic site) endonuclease activity"/>
    <property type="evidence" value="ECO:0007669"/>
    <property type="project" value="TreeGrafter"/>
</dbReference>
<dbReference type="GO" id="GO:0008081">
    <property type="term" value="F:phosphoric diester hydrolase activity"/>
    <property type="evidence" value="ECO:0007669"/>
    <property type="project" value="TreeGrafter"/>
</dbReference>
<dbReference type="GO" id="GO:0008270">
    <property type="term" value="F:zinc ion binding"/>
    <property type="evidence" value="ECO:0007669"/>
    <property type="project" value="UniProtKB-UniRule"/>
</dbReference>
<dbReference type="GO" id="GO:0006284">
    <property type="term" value="P:base-excision repair"/>
    <property type="evidence" value="ECO:0007669"/>
    <property type="project" value="TreeGrafter"/>
</dbReference>
<dbReference type="CDD" id="cd00019">
    <property type="entry name" value="AP2Ec"/>
    <property type="match status" value="1"/>
</dbReference>
<dbReference type="FunFam" id="3.20.20.150:FF:000001">
    <property type="entry name" value="Probable endonuclease 4"/>
    <property type="match status" value="1"/>
</dbReference>
<dbReference type="Gene3D" id="3.20.20.150">
    <property type="entry name" value="Divalent-metal-dependent TIM barrel enzymes"/>
    <property type="match status" value="1"/>
</dbReference>
<dbReference type="HAMAP" id="MF_00152">
    <property type="entry name" value="Nfo"/>
    <property type="match status" value="1"/>
</dbReference>
<dbReference type="InterPro" id="IPR001719">
    <property type="entry name" value="AP_endonuc_2"/>
</dbReference>
<dbReference type="InterPro" id="IPR018246">
    <property type="entry name" value="AP_endonuc_F2_Zn_BS"/>
</dbReference>
<dbReference type="InterPro" id="IPR036237">
    <property type="entry name" value="Xyl_isomerase-like_sf"/>
</dbReference>
<dbReference type="InterPro" id="IPR013022">
    <property type="entry name" value="Xyl_isomerase-like_TIM-brl"/>
</dbReference>
<dbReference type="NCBIfam" id="TIGR00587">
    <property type="entry name" value="nfo"/>
    <property type="match status" value="1"/>
</dbReference>
<dbReference type="NCBIfam" id="NF002196">
    <property type="entry name" value="PRK01060.1-1"/>
    <property type="match status" value="1"/>
</dbReference>
<dbReference type="PANTHER" id="PTHR21445:SF0">
    <property type="entry name" value="APURINIC-APYRIMIDINIC ENDONUCLEASE"/>
    <property type="match status" value="1"/>
</dbReference>
<dbReference type="PANTHER" id="PTHR21445">
    <property type="entry name" value="ENDONUCLEASE IV ENDODEOXYRIBONUCLEASE IV"/>
    <property type="match status" value="1"/>
</dbReference>
<dbReference type="Pfam" id="PF01261">
    <property type="entry name" value="AP_endonuc_2"/>
    <property type="match status" value="1"/>
</dbReference>
<dbReference type="SMART" id="SM00518">
    <property type="entry name" value="AP2Ec"/>
    <property type="match status" value="1"/>
</dbReference>
<dbReference type="SUPFAM" id="SSF51658">
    <property type="entry name" value="Xylose isomerase-like"/>
    <property type="match status" value="1"/>
</dbReference>
<dbReference type="PROSITE" id="PS00729">
    <property type="entry name" value="AP_NUCLEASE_F2_1"/>
    <property type="match status" value="1"/>
</dbReference>
<dbReference type="PROSITE" id="PS00730">
    <property type="entry name" value="AP_NUCLEASE_F2_2"/>
    <property type="match status" value="1"/>
</dbReference>
<dbReference type="PROSITE" id="PS00731">
    <property type="entry name" value="AP_NUCLEASE_F2_3"/>
    <property type="match status" value="1"/>
</dbReference>
<dbReference type="PROSITE" id="PS51432">
    <property type="entry name" value="AP_NUCLEASE_F2_4"/>
    <property type="match status" value="1"/>
</dbReference>
<accession>A6QHA0</accession>
<sequence>MLLGSHVSMSGKKMLEGSAIEAHEYGETTFMIYTGAPQNTRRKSIEDLNITKGHEVMEKYGLSNIVVHAPYIINIANTTKPETFNLGVDFLQQEIERTQAIGAKDIVLHPGAHVGAGVDAGINKIIEGLNEVLTNDNNVRIALETMAGKGTEIGRSFEELARIIDGVHNNERLSVCFDTCHTHDAGYNVKEDFDGVLNEFDKIIGVDRIKVVHVNDSKNDRGAQKDRHENIGFGYIGFDALNYIVHHDSFKDIPKILETPYVGEDKKNKKPPYKLEIEMLKQQQFDPELKNKVMQQ</sequence>